<comment type="function">
    <text evidence="1">Catalyzes the phosphorylation of the 3'-hydroxyl group of dephosphocoenzyme A to form coenzyme A.</text>
</comment>
<comment type="catalytic activity">
    <reaction evidence="1">
        <text>3'-dephospho-CoA + ATP = ADP + CoA + H(+)</text>
        <dbReference type="Rhea" id="RHEA:18245"/>
        <dbReference type="ChEBI" id="CHEBI:15378"/>
        <dbReference type="ChEBI" id="CHEBI:30616"/>
        <dbReference type="ChEBI" id="CHEBI:57287"/>
        <dbReference type="ChEBI" id="CHEBI:57328"/>
        <dbReference type="ChEBI" id="CHEBI:456216"/>
        <dbReference type="EC" id="2.7.1.24"/>
    </reaction>
</comment>
<comment type="pathway">
    <text evidence="1">Cofactor biosynthesis; coenzyme A biosynthesis; CoA from (R)-pantothenate: step 5/5.</text>
</comment>
<comment type="subcellular location">
    <subcellularLocation>
        <location evidence="1">Cytoplasm</location>
    </subcellularLocation>
</comment>
<comment type="similarity">
    <text evidence="1 2">Belongs to the CoaE family.</text>
</comment>
<dbReference type="EC" id="2.7.1.24" evidence="1"/>
<dbReference type="EMBL" id="AE005174">
    <property type="protein sequence ID" value="AAG54407.1"/>
    <property type="molecule type" value="Genomic_DNA"/>
</dbReference>
<dbReference type="EMBL" id="BA000007">
    <property type="protein sequence ID" value="BAB33530.1"/>
    <property type="molecule type" value="Genomic_DNA"/>
</dbReference>
<dbReference type="PIR" id="C85493">
    <property type="entry name" value="C85493"/>
</dbReference>
<dbReference type="PIR" id="C90642">
    <property type="entry name" value="C90642"/>
</dbReference>
<dbReference type="RefSeq" id="NP_308134.1">
    <property type="nucleotide sequence ID" value="NC_002695.1"/>
</dbReference>
<dbReference type="RefSeq" id="WP_001269520.1">
    <property type="nucleotide sequence ID" value="NZ_VOAI01000002.1"/>
</dbReference>
<dbReference type="SMR" id="P0A6J0"/>
<dbReference type="STRING" id="155864.Z0113"/>
<dbReference type="GeneID" id="913615"/>
<dbReference type="GeneID" id="93777332"/>
<dbReference type="KEGG" id="ece:Z0113"/>
<dbReference type="KEGG" id="ecs:ECs_0107"/>
<dbReference type="PATRIC" id="fig|386585.9.peg.206"/>
<dbReference type="eggNOG" id="COG0237">
    <property type="taxonomic scope" value="Bacteria"/>
</dbReference>
<dbReference type="HOGENOM" id="CLU_057180_1_2_6"/>
<dbReference type="OMA" id="CQMDIEQ"/>
<dbReference type="UniPathway" id="UPA00241">
    <property type="reaction ID" value="UER00356"/>
</dbReference>
<dbReference type="Proteomes" id="UP000000558">
    <property type="component" value="Chromosome"/>
</dbReference>
<dbReference type="Proteomes" id="UP000002519">
    <property type="component" value="Chromosome"/>
</dbReference>
<dbReference type="GO" id="GO:0005737">
    <property type="term" value="C:cytoplasm"/>
    <property type="evidence" value="ECO:0007669"/>
    <property type="project" value="UniProtKB-SubCell"/>
</dbReference>
<dbReference type="GO" id="GO:0005524">
    <property type="term" value="F:ATP binding"/>
    <property type="evidence" value="ECO:0007669"/>
    <property type="project" value="UniProtKB-UniRule"/>
</dbReference>
<dbReference type="GO" id="GO:0004140">
    <property type="term" value="F:dephospho-CoA kinase activity"/>
    <property type="evidence" value="ECO:0007669"/>
    <property type="project" value="UniProtKB-UniRule"/>
</dbReference>
<dbReference type="GO" id="GO:0015937">
    <property type="term" value="P:coenzyme A biosynthetic process"/>
    <property type="evidence" value="ECO:0007669"/>
    <property type="project" value="UniProtKB-UniRule"/>
</dbReference>
<dbReference type="CDD" id="cd02022">
    <property type="entry name" value="DPCK"/>
    <property type="match status" value="1"/>
</dbReference>
<dbReference type="FunFam" id="3.40.50.300:FF:000518">
    <property type="entry name" value="Dephospho-CoA kinase"/>
    <property type="match status" value="1"/>
</dbReference>
<dbReference type="Gene3D" id="3.40.50.300">
    <property type="entry name" value="P-loop containing nucleotide triphosphate hydrolases"/>
    <property type="match status" value="1"/>
</dbReference>
<dbReference type="HAMAP" id="MF_00376">
    <property type="entry name" value="Dephospho_CoA_kinase"/>
    <property type="match status" value="1"/>
</dbReference>
<dbReference type="InterPro" id="IPR001977">
    <property type="entry name" value="Depp_CoAkinase"/>
</dbReference>
<dbReference type="InterPro" id="IPR027417">
    <property type="entry name" value="P-loop_NTPase"/>
</dbReference>
<dbReference type="NCBIfam" id="TIGR00152">
    <property type="entry name" value="dephospho-CoA kinase"/>
    <property type="match status" value="1"/>
</dbReference>
<dbReference type="PANTHER" id="PTHR10695:SF46">
    <property type="entry name" value="BIFUNCTIONAL COENZYME A SYNTHASE-RELATED"/>
    <property type="match status" value="1"/>
</dbReference>
<dbReference type="PANTHER" id="PTHR10695">
    <property type="entry name" value="DEPHOSPHO-COA KINASE-RELATED"/>
    <property type="match status" value="1"/>
</dbReference>
<dbReference type="Pfam" id="PF01121">
    <property type="entry name" value="CoaE"/>
    <property type="match status" value="1"/>
</dbReference>
<dbReference type="SUPFAM" id="SSF52540">
    <property type="entry name" value="P-loop containing nucleoside triphosphate hydrolases"/>
    <property type="match status" value="1"/>
</dbReference>
<dbReference type="PROSITE" id="PS51219">
    <property type="entry name" value="DPCK"/>
    <property type="match status" value="1"/>
</dbReference>
<reference key="1">
    <citation type="journal article" date="2001" name="Nature">
        <title>Genome sequence of enterohaemorrhagic Escherichia coli O157:H7.</title>
        <authorList>
            <person name="Perna N.T."/>
            <person name="Plunkett G. III"/>
            <person name="Burland V."/>
            <person name="Mau B."/>
            <person name="Glasner J.D."/>
            <person name="Rose D.J."/>
            <person name="Mayhew G.F."/>
            <person name="Evans P.S."/>
            <person name="Gregor J."/>
            <person name="Kirkpatrick H.A."/>
            <person name="Posfai G."/>
            <person name="Hackett J."/>
            <person name="Klink S."/>
            <person name="Boutin A."/>
            <person name="Shao Y."/>
            <person name="Miller L."/>
            <person name="Grotbeck E.J."/>
            <person name="Davis N.W."/>
            <person name="Lim A."/>
            <person name="Dimalanta E.T."/>
            <person name="Potamousis K."/>
            <person name="Apodaca J."/>
            <person name="Anantharaman T.S."/>
            <person name="Lin J."/>
            <person name="Yen G."/>
            <person name="Schwartz D.C."/>
            <person name="Welch R.A."/>
            <person name="Blattner F.R."/>
        </authorList>
    </citation>
    <scope>NUCLEOTIDE SEQUENCE [LARGE SCALE GENOMIC DNA]</scope>
    <source>
        <strain>O157:H7 / EDL933 / ATCC 700927 / EHEC</strain>
    </source>
</reference>
<reference key="2">
    <citation type="journal article" date="2001" name="DNA Res.">
        <title>Complete genome sequence of enterohemorrhagic Escherichia coli O157:H7 and genomic comparison with a laboratory strain K-12.</title>
        <authorList>
            <person name="Hayashi T."/>
            <person name="Makino K."/>
            <person name="Ohnishi M."/>
            <person name="Kurokawa K."/>
            <person name="Ishii K."/>
            <person name="Yokoyama K."/>
            <person name="Han C.-G."/>
            <person name="Ohtsubo E."/>
            <person name="Nakayama K."/>
            <person name="Murata T."/>
            <person name="Tanaka M."/>
            <person name="Tobe T."/>
            <person name="Iida T."/>
            <person name="Takami H."/>
            <person name="Honda T."/>
            <person name="Sasakawa C."/>
            <person name="Ogasawara N."/>
            <person name="Yasunaga T."/>
            <person name="Kuhara S."/>
            <person name="Shiba T."/>
            <person name="Hattori M."/>
            <person name="Shinagawa H."/>
        </authorList>
    </citation>
    <scope>NUCLEOTIDE SEQUENCE [LARGE SCALE GENOMIC DNA]</scope>
    <source>
        <strain>O157:H7 / Sakai / RIMD 0509952 / EHEC</strain>
    </source>
</reference>
<organism>
    <name type="scientific">Escherichia coli O157:H7</name>
    <dbReference type="NCBI Taxonomy" id="83334"/>
    <lineage>
        <taxon>Bacteria</taxon>
        <taxon>Pseudomonadati</taxon>
        <taxon>Pseudomonadota</taxon>
        <taxon>Gammaproteobacteria</taxon>
        <taxon>Enterobacterales</taxon>
        <taxon>Enterobacteriaceae</taxon>
        <taxon>Escherichia</taxon>
    </lineage>
</organism>
<sequence>MRYIVALTGGIGSGKSTVANAFADLGINVIDADIIARQVVEPGAPALHAIADHFGANMIAADGTLQRRALRERIFANPEEKNWLNALLHPLIQQETQHQIQQATSPYVLWVVPLLVENSLYKKANRVLVVDVSPETQLKRTMQRDDVTREHVEQILAAQATREARLAVADDVIDNNGAPDAIASDVARLHAHYLQLASQFVSQEKP</sequence>
<name>COAE_ECO57</name>
<keyword id="KW-0067">ATP-binding</keyword>
<keyword id="KW-0173">Coenzyme A biosynthesis</keyword>
<keyword id="KW-0963">Cytoplasm</keyword>
<keyword id="KW-0418">Kinase</keyword>
<keyword id="KW-0547">Nucleotide-binding</keyword>
<keyword id="KW-1185">Reference proteome</keyword>
<keyword id="KW-0808">Transferase</keyword>
<proteinExistence type="inferred from homology"/>
<accession>P0A6J0</accession>
<accession>P36679</accession>
<accession>P75646</accession>
<feature type="chain" id="PRO_0000172941" description="Dephospho-CoA kinase">
    <location>
        <begin position="1"/>
        <end position="206"/>
    </location>
</feature>
<feature type="domain" description="DPCK" evidence="1">
    <location>
        <begin position="4"/>
        <end position="200"/>
    </location>
</feature>
<feature type="binding site" evidence="1">
    <location>
        <begin position="12"/>
        <end position="17"/>
    </location>
    <ligand>
        <name>ATP</name>
        <dbReference type="ChEBI" id="CHEBI:30616"/>
    </ligand>
</feature>
<evidence type="ECO:0000255" key="1">
    <source>
        <dbReference type="HAMAP-Rule" id="MF_00376"/>
    </source>
</evidence>
<evidence type="ECO:0000305" key="2"/>
<gene>
    <name evidence="1" type="primary">coaE</name>
    <name type="ordered locus">Z0113</name>
    <name type="ordered locus">ECs0107</name>
</gene>
<protein>
    <recommendedName>
        <fullName evidence="1">Dephospho-CoA kinase</fullName>
        <ecNumber evidence="1">2.7.1.24</ecNumber>
    </recommendedName>
    <alternativeName>
        <fullName evidence="1">Dephosphocoenzyme A kinase</fullName>
    </alternativeName>
</protein>